<evidence type="ECO:0000255" key="1">
    <source>
        <dbReference type="HAMAP-Rule" id="MF_01062"/>
    </source>
</evidence>
<reference key="1">
    <citation type="journal article" date="2003" name="Nat. Biotechnol.">
        <title>The genome sequence of the entomopathogenic bacterium Photorhabdus luminescens.</title>
        <authorList>
            <person name="Duchaud E."/>
            <person name="Rusniok C."/>
            <person name="Frangeul L."/>
            <person name="Buchrieser C."/>
            <person name="Givaudan A."/>
            <person name="Taourit S."/>
            <person name="Bocs S."/>
            <person name="Boursaux-Eude C."/>
            <person name="Chandler M."/>
            <person name="Charles J.-F."/>
            <person name="Dassa E."/>
            <person name="Derose R."/>
            <person name="Derzelle S."/>
            <person name="Freyssinet G."/>
            <person name="Gaudriault S."/>
            <person name="Medigue C."/>
            <person name="Lanois A."/>
            <person name="Powell K."/>
            <person name="Siguier P."/>
            <person name="Vincent R."/>
            <person name="Wingate V."/>
            <person name="Zouine M."/>
            <person name="Glaser P."/>
            <person name="Boemare N."/>
            <person name="Danchin A."/>
            <person name="Kunst F."/>
        </authorList>
    </citation>
    <scope>NUCLEOTIDE SEQUENCE [LARGE SCALE GENOMIC DNA]</scope>
    <source>
        <strain>DSM 15139 / CIP 105565 / TT01</strain>
    </source>
</reference>
<keyword id="KW-0418">Kinase</keyword>
<keyword id="KW-0547">Nucleotide-binding</keyword>
<keyword id="KW-1185">Reference proteome</keyword>
<keyword id="KW-0723">Serine/threonine-protein kinase</keyword>
<keyword id="KW-0808">Transferase</keyword>
<name>PSRP_PHOLL</name>
<comment type="function">
    <text evidence="1">Bifunctional serine/threonine kinase and phosphorylase involved in the regulation of the phosphoenolpyruvate synthase (PEPS) by catalyzing its phosphorylation/dephosphorylation.</text>
</comment>
<comment type="catalytic activity">
    <reaction evidence="1">
        <text>[pyruvate, water dikinase] + ADP = [pyruvate, water dikinase]-phosphate + AMP + H(+)</text>
        <dbReference type="Rhea" id="RHEA:46020"/>
        <dbReference type="Rhea" id="RHEA-COMP:11425"/>
        <dbReference type="Rhea" id="RHEA-COMP:11426"/>
        <dbReference type="ChEBI" id="CHEBI:15378"/>
        <dbReference type="ChEBI" id="CHEBI:43176"/>
        <dbReference type="ChEBI" id="CHEBI:68546"/>
        <dbReference type="ChEBI" id="CHEBI:456215"/>
        <dbReference type="ChEBI" id="CHEBI:456216"/>
        <dbReference type="EC" id="2.7.11.33"/>
    </reaction>
</comment>
<comment type="catalytic activity">
    <reaction evidence="1">
        <text>[pyruvate, water dikinase]-phosphate + phosphate + H(+) = [pyruvate, water dikinase] + diphosphate</text>
        <dbReference type="Rhea" id="RHEA:48580"/>
        <dbReference type="Rhea" id="RHEA-COMP:11425"/>
        <dbReference type="Rhea" id="RHEA-COMP:11426"/>
        <dbReference type="ChEBI" id="CHEBI:15378"/>
        <dbReference type="ChEBI" id="CHEBI:33019"/>
        <dbReference type="ChEBI" id="CHEBI:43176"/>
        <dbReference type="ChEBI" id="CHEBI:43474"/>
        <dbReference type="ChEBI" id="CHEBI:68546"/>
        <dbReference type="EC" id="2.7.4.28"/>
    </reaction>
</comment>
<comment type="similarity">
    <text evidence="1">Belongs to the pyruvate, phosphate/water dikinase regulatory protein family. PSRP subfamily.</text>
</comment>
<sequence>MAKFRLETSAERNGRNSVEGVERTVFFISDGTAITAEVLGHAVLSQFPIKITSYTLPFVASETRAEEIKQQINQIYQDTRIRPLVFYSIISSGVKNIITSSEGFCQDIVQTLVAPLQQETGLEPKPELNRTHGLTEKNLSQYDARIAAIDYALAHDDGISLRNLDQAQVILLGVSRCGKTPTSLYLAMQFGIQAANYPFTADDMDNLQLPATLKQFQHKLFGLTISPERLAAIREERRENSRYASLRQCRIEISEVEALFRKNKINYLNTTNYSVEEISTKIIDMMKLNRRMF</sequence>
<protein>
    <recommendedName>
        <fullName evidence="1">Putative phosphoenolpyruvate synthase regulatory protein</fullName>
        <shortName evidence="1">PEP synthase regulatory protein</shortName>
        <shortName evidence="1">PSRP</shortName>
        <ecNumber evidence="1">2.7.11.33</ecNumber>
        <ecNumber evidence="1">2.7.4.28</ecNumber>
    </recommendedName>
    <alternativeName>
        <fullName evidence="1">Pyruvate, water dikinase regulatory protein</fullName>
    </alternativeName>
</protein>
<accession>Q7N3T4</accession>
<dbReference type="EC" id="2.7.11.33" evidence="1"/>
<dbReference type="EC" id="2.7.4.28" evidence="1"/>
<dbReference type="EMBL" id="BX571867">
    <property type="protein sequence ID" value="CAE15003.1"/>
    <property type="molecule type" value="Genomic_DNA"/>
</dbReference>
<dbReference type="RefSeq" id="WP_011146851.1">
    <property type="nucleotide sequence ID" value="NC_005126.1"/>
</dbReference>
<dbReference type="SMR" id="Q7N3T4"/>
<dbReference type="STRING" id="243265.plu2629"/>
<dbReference type="GeneID" id="48848892"/>
<dbReference type="KEGG" id="plu:plu2629"/>
<dbReference type="eggNOG" id="COG1806">
    <property type="taxonomic scope" value="Bacteria"/>
</dbReference>
<dbReference type="HOGENOM" id="CLU_046206_1_0_6"/>
<dbReference type="OrthoDB" id="9782201at2"/>
<dbReference type="Proteomes" id="UP000002514">
    <property type="component" value="Chromosome"/>
</dbReference>
<dbReference type="GO" id="GO:0043531">
    <property type="term" value="F:ADP binding"/>
    <property type="evidence" value="ECO:0007669"/>
    <property type="project" value="UniProtKB-UniRule"/>
</dbReference>
<dbReference type="GO" id="GO:0005524">
    <property type="term" value="F:ATP binding"/>
    <property type="evidence" value="ECO:0007669"/>
    <property type="project" value="InterPro"/>
</dbReference>
<dbReference type="GO" id="GO:0003677">
    <property type="term" value="F:DNA binding"/>
    <property type="evidence" value="ECO:0007669"/>
    <property type="project" value="InterPro"/>
</dbReference>
<dbReference type="GO" id="GO:0016776">
    <property type="term" value="F:phosphotransferase activity, phosphate group as acceptor"/>
    <property type="evidence" value="ECO:0007669"/>
    <property type="project" value="UniProtKB-UniRule"/>
</dbReference>
<dbReference type="GO" id="GO:0004674">
    <property type="term" value="F:protein serine/threonine kinase activity"/>
    <property type="evidence" value="ECO:0007669"/>
    <property type="project" value="UniProtKB-UniRule"/>
</dbReference>
<dbReference type="GO" id="GO:0006355">
    <property type="term" value="P:regulation of DNA-templated transcription"/>
    <property type="evidence" value="ECO:0007669"/>
    <property type="project" value="InterPro"/>
</dbReference>
<dbReference type="HAMAP" id="MF_01062">
    <property type="entry name" value="PSRP"/>
    <property type="match status" value="1"/>
</dbReference>
<dbReference type="InterPro" id="IPR005177">
    <property type="entry name" value="Kinase-pyrophosphorylase"/>
</dbReference>
<dbReference type="InterPro" id="IPR026530">
    <property type="entry name" value="PSRP"/>
</dbReference>
<dbReference type="InterPro" id="IPR008917">
    <property type="entry name" value="TF_DNA-bd_sf"/>
</dbReference>
<dbReference type="NCBIfam" id="NF003742">
    <property type="entry name" value="PRK05339.1"/>
    <property type="match status" value="1"/>
</dbReference>
<dbReference type="PANTHER" id="PTHR31756">
    <property type="entry name" value="PYRUVATE, PHOSPHATE DIKINASE REGULATORY PROTEIN 1, CHLOROPLASTIC"/>
    <property type="match status" value="1"/>
</dbReference>
<dbReference type="PANTHER" id="PTHR31756:SF3">
    <property type="entry name" value="PYRUVATE, PHOSPHATE DIKINASE REGULATORY PROTEIN 1, CHLOROPLASTIC"/>
    <property type="match status" value="1"/>
</dbReference>
<dbReference type="Pfam" id="PF03618">
    <property type="entry name" value="Kinase-PPPase"/>
    <property type="match status" value="1"/>
</dbReference>
<dbReference type="SUPFAM" id="SSF47454">
    <property type="entry name" value="A DNA-binding domain in eukaryotic transcription factors"/>
    <property type="match status" value="1"/>
</dbReference>
<feature type="chain" id="PRO_0000196686" description="Putative phosphoenolpyruvate synthase regulatory protein">
    <location>
        <begin position="1"/>
        <end position="293"/>
    </location>
</feature>
<feature type="binding site" evidence="1">
    <location>
        <begin position="173"/>
        <end position="180"/>
    </location>
    <ligand>
        <name>ADP</name>
        <dbReference type="ChEBI" id="CHEBI:456216"/>
    </ligand>
</feature>
<proteinExistence type="inferred from homology"/>
<organism>
    <name type="scientific">Photorhabdus laumondii subsp. laumondii (strain DSM 15139 / CIP 105565 / TT01)</name>
    <name type="common">Photorhabdus luminescens subsp. laumondii</name>
    <dbReference type="NCBI Taxonomy" id="243265"/>
    <lineage>
        <taxon>Bacteria</taxon>
        <taxon>Pseudomonadati</taxon>
        <taxon>Pseudomonadota</taxon>
        <taxon>Gammaproteobacteria</taxon>
        <taxon>Enterobacterales</taxon>
        <taxon>Morganellaceae</taxon>
        <taxon>Photorhabdus</taxon>
    </lineage>
</organism>
<gene>
    <name type="ordered locus">plu2629</name>
</gene>